<sequence>MSELNPVDNQKVDSINVDKSSPELKKHTFEAEVAQLLHLVTHSLYSNSDIFVRELVSNASDACDKLRFEATNDDSLYEDDGELKIRIAVDEDAKTITFTDNGIGMNEADAIENLGTIAKSGTKAFLDKLSESQKQDGQLIGQFGVGFYSGFIVADTISVETRKAGEPADKGVRWVSDGTGSFTVEPITKETRGTAITLHLKEQYSEGEESYLDRGKIKQLVNKYSDHISLPIQMRKEVWQEDEVEEGSDTPANGQMVLTDEWETINKASALWTRSASEIEDEEYIDFYKNITYDMDAPLAWTHNRVEGRVQYTQLLYIPKKAPVDLYTREQQHGLKLYVKRVFIMDEAEQLLPMYLRFVKGVIDSADLPLNVSRELLQESRDVKSIRDGNARRILTLLASLANSEDSDKQEKFAQFYAEFGDVIKEGVGEDMGNQERIAKLLRYATSTQDSVTTSFEDYKARMKEGQKAIYYLTADNLAAAKNSPQLELFKKKGIEVILMTSRVDEWAMNFLTSFDETPLQNIAKGAVDLGDLQDEAEKAEAEKAQETMKPIVDKLKTALGERAKDVKVSTRLVDSPACLVVGEGELSPQMIQMLKQMGQDVPESKPTLEVNPDHPLIKKLESSEQSAEDFDKLAQVIFDQALLADGGQLDDPAAYLRRVNELLMR</sequence>
<protein>
    <recommendedName>
        <fullName evidence="1">Chaperone protein HtpG</fullName>
    </recommendedName>
    <alternativeName>
        <fullName evidence="1">Heat shock protein HtpG</fullName>
    </alternativeName>
    <alternativeName>
        <fullName evidence="1">High temperature protein G</fullName>
    </alternativeName>
</protein>
<accession>Q1Q978</accession>
<feature type="chain" id="PRO_0000258518" description="Chaperone protein HtpG">
    <location>
        <begin position="1"/>
        <end position="666"/>
    </location>
</feature>
<feature type="region of interest" description="A; substrate-binding" evidence="1">
    <location>
        <begin position="1"/>
        <end position="374"/>
    </location>
</feature>
<feature type="region of interest" description="B" evidence="1">
    <location>
        <begin position="375"/>
        <end position="593"/>
    </location>
</feature>
<feature type="region of interest" description="C" evidence="1">
    <location>
        <begin position="594"/>
        <end position="666"/>
    </location>
</feature>
<gene>
    <name evidence="1" type="primary">htpG</name>
    <name type="ordered locus">Pcryo_1998</name>
</gene>
<reference key="1">
    <citation type="submission" date="2006-03" db="EMBL/GenBank/DDBJ databases">
        <title>Complete sequence of chromosome of Psychrobacter cryohalolentis K5.</title>
        <authorList>
            <consortium name="US DOE Joint Genome Institute"/>
            <person name="Copeland A."/>
            <person name="Lucas S."/>
            <person name="Lapidus A."/>
            <person name="Barry K."/>
            <person name="Detter J.C."/>
            <person name="Glavina T."/>
            <person name="Hammon N."/>
            <person name="Israni S."/>
            <person name="Dalin E."/>
            <person name="Tice H."/>
            <person name="Pitluck S."/>
            <person name="Brettin T."/>
            <person name="Bruce D."/>
            <person name="Han C."/>
            <person name="Tapia R."/>
            <person name="Sims D.R."/>
            <person name="Gilna P."/>
            <person name="Schmutz J."/>
            <person name="Larimer F."/>
            <person name="Land M."/>
            <person name="Hauser L."/>
            <person name="Kyrpides N."/>
            <person name="Kim E."/>
            <person name="Richardson P."/>
        </authorList>
    </citation>
    <scope>NUCLEOTIDE SEQUENCE [LARGE SCALE GENOMIC DNA]</scope>
    <source>
        <strain>ATCC BAA-1226 / DSM 17306 / VKM B-2378 / K5</strain>
    </source>
</reference>
<proteinExistence type="inferred from homology"/>
<comment type="function">
    <text evidence="1">Molecular chaperone. Has ATPase activity.</text>
</comment>
<comment type="subunit">
    <text evidence="1">Homodimer.</text>
</comment>
<comment type="subcellular location">
    <subcellularLocation>
        <location evidence="1">Cytoplasm</location>
    </subcellularLocation>
</comment>
<comment type="similarity">
    <text evidence="1">Belongs to the heat shock protein 90 family.</text>
</comment>
<organism>
    <name type="scientific">Psychrobacter cryohalolentis (strain ATCC BAA-1226 / DSM 17306 / VKM B-2378 / K5)</name>
    <dbReference type="NCBI Taxonomy" id="335284"/>
    <lineage>
        <taxon>Bacteria</taxon>
        <taxon>Pseudomonadati</taxon>
        <taxon>Pseudomonadota</taxon>
        <taxon>Gammaproteobacteria</taxon>
        <taxon>Moraxellales</taxon>
        <taxon>Moraxellaceae</taxon>
        <taxon>Psychrobacter</taxon>
    </lineage>
</organism>
<evidence type="ECO:0000255" key="1">
    <source>
        <dbReference type="HAMAP-Rule" id="MF_00505"/>
    </source>
</evidence>
<dbReference type="EMBL" id="CP000323">
    <property type="protein sequence ID" value="ABE75775.1"/>
    <property type="molecule type" value="Genomic_DNA"/>
</dbReference>
<dbReference type="RefSeq" id="WP_011514316.1">
    <property type="nucleotide sequence ID" value="NC_007969.1"/>
</dbReference>
<dbReference type="SMR" id="Q1Q978"/>
<dbReference type="STRING" id="335284.Pcryo_1998"/>
<dbReference type="KEGG" id="pcr:Pcryo_1998"/>
<dbReference type="eggNOG" id="COG0326">
    <property type="taxonomic scope" value="Bacteria"/>
</dbReference>
<dbReference type="HOGENOM" id="CLU_006684_3_0_6"/>
<dbReference type="Proteomes" id="UP000002425">
    <property type="component" value="Chromosome"/>
</dbReference>
<dbReference type="GO" id="GO:0005737">
    <property type="term" value="C:cytoplasm"/>
    <property type="evidence" value="ECO:0007669"/>
    <property type="project" value="UniProtKB-SubCell"/>
</dbReference>
<dbReference type="GO" id="GO:0005524">
    <property type="term" value="F:ATP binding"/>
    <property type="evidence" value="ECO:0007669"/>
    <property type="project" value="UniProtKB-UniRule"/>
</dbReference>
<dbReference type="GO" id="GO:0016887">
    <property type="term" value="F:ATP hydrolysis activity"/>
    <property type="evidence" value="ECO:0007669"/>
    <property type="project" value="InterPro"/>
</dbReference>
<dbReference type="GO" id="GO:0140662">
    <property type="term" value="F:ATP-dependent protein folding chaperone"/>
    <property type="evidence" value="ECO:0007669"/>
    <property type="project" value="InterPro"/>
</dbReference>
<dbReference type="GO" id="GO:0051082">
    <property type="term" value="F:unfolded protein binding"/>
    <property type="evidence" value="ECO:0007669"/>
    <property type="project" value="UniProtKB-UniRule"/>
</dbReference>
<dbReference type="CDD" id="cd16927">
    <property type="entry name" value="HATPase_Hsp90-like"/>
    <property type="match status" value="1"/>
</dbReference>
<dbReference type="FunFam" id="3.30.230.80:FF:000002">
    <property type="entry name" value="Molecular chaperone HtpG"/>
    <property type="match status" value="1"/>
</dbReference>
<dbReference type="FunFam" id="3.30.565.10:FF:000009">
    <property type="entry name" value="Molecular chaperone HtpG"/>
    <property type="match status" value="1"/>
</dbReference>
<dbReference type="Gene3D" id="3.30.230.80">
    <property type="match status" value="1"/>
</dbReference>
<dbReference type="Gene3D" id="3.40.50.11260">
    <property type="match status" value="1"/>
</dbReference>
<dbReference type="Gene3D" id="1.20.120.790">
    <property type="entry name" value="Heat shock protein 90, C-terminal domain"/>
    <property type="match status" value="1"/>
</dbReference>
<dbReference type="Gene3D" id="3.30.565.10">
    <property type="entry name" value="Histidine kinase-like ATPase, C-terminal domain"/>
    <property type="match status" value="1"/>
</dbReference>
<dbReference type="HAMAP" id="MF_00505">
    <property type="entry name" value="HSP90"/>
    <property type="match status" value="1"/>
</dbReference>
<dbReference type="InterPro" id="IPR036890">
    <property type="entry name" value="HATPase_C_sf"/>
</dbReference>
<dbReference type="InterPro" id="IPR037196">
    <property type="entry name" value="HSP90_C"/>
</dbReference>
<dbReference type="InterPro" id="IPR001404">
    <property type="entry name" value="Hsp90_fam"/>
</dbReference>
<dbReference type="InterPro" id="IPR020575">
    <property type="entry name" value="Hsp90_N"/>
</dbReference>
<dbReference type="InterPro" id="IPR020568">
    <property type="entry name" value="Ribosomal_Su5_D2-typ_SF"/>
</dbReference>
<dbReference type="NCBIfam" id="NF003555">
    <property type="entry name" value="PRK05218.1"/>
    <property type="match status" value="1"/>
</dbReference>
<dbReference type="PANTHER" id="PTHR11528">
    <property type="entry name" value="HEAT SHOCK PROTEIN 90 FAMILY MEMBER"/>
    <property type="match status" value="1"/>
</dbReference>
<dbReference type="Pfam" id="PF13589">
    <property type="entry name" value="HATPase_c_3"/>
    <property type="match status" value="1"/>
</dbReference>
<dbReference type="Pfam" id="PF00183">
    <property type="entry name" value="HSP90"/>
    <property type="match status" value="1"/>
</dbReference>
<dbReference type="PIRSF" id="PIRSF002583">
    <property type="entry name" value="Hsp90"/>
    <property type="match status" value="1"/>
</dbReference>
<dbReference type="PRINTS" id="PR00775">
    <property type="entry name" value="HEATSHOCK90"/>
</dbReference>
<dbReference type="SUPFAM" id="SSF55874">
    <property type="entry name" value="ATPase domain of HSP90 chaperone/DNA topoisomerase II/histidine kinase"/>
    <property type="match status" value="1"/>
</dbReference>
<dbReference type="SUPFAM" id="SSF110942">
    <property type="entry name" value="HSP90 C-terminal domain"/>
    <property type="match status" value="1"/>
</dbReference>
<dbReference type="SUPFAM" id="SSF54211">
    <property type="entry name" value="Ribosomal protein S5 domain 2-like"/>
    <property type="match status" value="1"/>
</dbReference>
<name>HTPG_PSYCK</name>
<keyword id="KW-0067">ATP-binding</keyword>
<keyword id="KW-0143">Chaperone</keyword>
<keyword id="KW-0963">Cytoplasm</keyword>
<keyword id="KW-0547">Nucleotide-binding</keyword>
<keyword id="KW-0346">Stress response</keyword>